<sequence length="390" mass="43074">MSIRRVMHVDLDAFFVSVEQAVRPELKDKPVIVGGKPERRGVVAAASYEARKFGIHSGMPLITAKNLCPQAIFIEGNHQLYREYSEKFMLILSDFSPFLEPMGLDEAYLEVTGFESLHGSIAEMASKIRRRITAEMGINASIGIANSKVAAKIATERAKPNGQCEVPAGEEASFLAPLDIAVMPGIGKKTEQHLKSLGIDTLGKLAALPASFLKSRLGAYAPYLSNAAMGIDNRPVEMPSEAKSISRETTFETDTRNQTFLEAKLSYLSEKITATLRKRGKQARVVQIKIRFADFTTLTRQKHLGQPASGNREIFQTALSLMNGILDSDRQTVRLLGVGISDFCGPEKQLEIDPAKARLEKLDASLDKIRQKYGFSSVQTGRTYRLKDMF</sequence>
<name>DPO4_DEHMC</name>
<protein>
    <recommendedName>
        <fullName evidence="1">DNA polymerase IV</fullName>
        <shortName evidence="1">Pol IV</shortName>
        <ecNumber evidence="1">2.7.7.7</ecNumber>
    </recommendedName>
</protein>
<keyword id="KW-0963">Cytoplasm</keyword>
<keyword id="KW-0227">DNA damage</keyword>
<keyword id="KW-0234">DNA repair</keyword>
<keyword id="KW-0235">DNA replication</keyword>
<keyword id="KW-0238">DNA-binding</keyword>
<keyword id="KW-0239">DNA-directed DNA polymerase</keyword>
<keyword id="KW-0460">Magnesium</keyword>
<keyword id="KW-0479">Metal-binding</keyword>
<keyword id="KW-0515">Mutator protein</keyword>
<keyword id="KW-0548">Nucleotidyltransferase</keyword>
<keyword id="KW-0808">Transferase</keyword>
<dbReference type="EC" id="2.7.7.7" evidence="1"/>
<dbReference type="EMBL" id="AJ965256">
    <property type="protein sequence ID" value="CAI82289.1"/>
    <property type="molecule type" value="Genomic_DNA"/>
</dbReference>
<dbReference type="RefSeq" id="WP_011308648.1">
    <property type="nucleotide sequence ID" value="NC_007356.1"/>
</dbReference>
<dbReference type="SMR" id="Q3ZWB2"/>
<dbReference type="KEGG" id="deh:cbdbA12"/>
<dbReference type="HOGENOM" id="CLU_012348_1_2_0"/>
<dbReference type="Proteomes" id="UP000000433">
    <property type="component" value="Chromosome"/>
</dbReference>
<dbReference type="GO" id="GO:0005829">
    <property type="term" value="C:cytosol"/>
    <property type="evidence" value="ECO:0007669"/>
    <property type="project" value="TreeGrafter"/>
</dbReference>
<dbReference type="GO" id="GO:0003684">
    <property type="term" value="F:damaged DNA binding"/>
    <property type="evidence" value="ECO:0007669"/>
    <property type="project" value="InterPro"/>
</dbReference>
<dbReference type="GO" id="GO:0003887">
    <property type="term" value="F:DNA-directed DNA polymerase activity"/>
    <property type="evidence" value="ECO:0007669"/>
    <property type="project" value="UniProtKB-UniRule"/>
</dbReference>
<dbReference type="GO" id="GO:0000287">
    <property type="term" value="F:magnesium ion binding"/>
    <property type="evidence" value="ECO:0007669"/>
    <property type="project" value="UniProtKB-UniRule"/>
</dbReference>
<dbReference type="GO" id="GO:0006261">
    <property type="term" value="P:DNA-templated DNA replication"/>
    <property type="evidence" value="ECO:0007669"/>
    <property type="project" value="UniProtKB-UniRule"/>
</dbReference>
<dbReference type="GO" id="GO:0042276">
    <property type="term" value="P:error-prone translesion synthesis"/>
    <property type="evidence" value="ECO:0007669"/>
    <property type="project" value="TreeGrafter"/>
</dbReference>
<dbReference type="GO" id="GO:0009432">
    <property type="term" value="P:SOS response"/>
    <property type="evidence" value="ECO:0007669"/>
    <property type="project" value="TreeGrafter"/>
</dbReference>
<dbReference type="CDD" id="cd03586">
    <property type="entry name" value="PolY_Pol_IV_kappa"/>
    <property type="match status" value="1"/>
</dbReference>
<dbReference type="FunFam" id="3.30.1490.100:FF:000016">
    <property type="entry name" value="DNA polymerase IV"/>
    <property type="match status" value="1"/>
</dbReference>
<dbReference type="FunFam" id="3.40.1170.60:FF:000001">
    <property type="entry name" value="DNA polymerase IV"/>
    <property type="match status" value="1"/>
</dbReference>
<dbReference type="Gene3D" id="3.30.70.270">
    <property type="match status" value="1"/>
</dbReference>
<dbReference type="Gene3D" id="3.40.1170.60">
    <property type="match status" value="1"/>
</dbReference>
<dbReference type="Gene3D" id="1.10.150.20">
    <property type="entry name" value="5' to 3' exonuclease, C-terminal subdomain"/>
    <property type="match status" value="1"/>
</dbReference>
<dbReference type="Gene3D" id="3.30.1490.100">
    <property type="entry name" value="DNA polymerase, Y-family, little finger domain"/>
    <property type="match status" value="1"/>
</dbReference>
<dbReference type="HAMAP" id="MF_01113">
    <property type="entry name" value="DNApol_IV"/>
    <property type="match status" value="1"/>
</dbReference>
<dbReference type="InterPro" id="IPR043502">
    <property type="entry name" value="DNA/RNA_pol_sf"/>
</dbReference>
<dbReference type="InterPro" id="IPR036775">
    <property type="entry name" value="DNA_pol_Y-fam_lit_finger_sf"/>
</dbReference>
<dbReference type="InterPro" id="IPR017961">
    <property type="entry name" value="DNA_pol_Y-fam_little_finger"/>
</dbReference>
<dbReference type="InterPro" id="IPR050116">
    <property type="entry name" value="DNA_polymerase-Y"/>
</dbReference>
<dbReference type="InterPro" id="IPR022880">
    <property type="entry name" value="DNApol_IV"/>
</dbReference>
<dbReference type="InterPro" id="IPR024728">
    <property type="entry name" value="PolY_HhH_motif"/>
</dbReference>
<dbReference type="InterPro" id="IPR043128">
    <property type="entry name" value="Rev_trsase/Diguanyl_cyclase"/>
</dbReference>
<dbReference type="InterPro" id="IPR001126">
    <property type="entry name" value="UmuC"/>
</dbReference>
<dbReference type="NCBIfam" id="NF002677">
    <property type="entry name" value="PRK02406.1"/>
    <property type="match status" value="1"/>
</dbReference>
<dbReference type="PANTHER" id="PTHR11076:SF33">
    <property type="entry name" value="DNA POLYMERASE KAPPA"/>
    <property type="match status" value="1"/>
</dbReference>
<dbReference type="PANTHER" id="PTHR11076">
    <property type="entry name" value="DNA REPAIR POLYMERASE UMUC / TRANSFERASE FAMILY MEMBER"/>
    <property type="match status" value="1"/>
</dbReference>
<dbReference type="Pfam" id="PF00817">
    <property type="entry name" value="IMS"/>
    <property type="match status" value="1"/>
</dbReference>
<dbReference type="Pfam" id="PF11799">
    <property type="entry name" value="IMS_C"/>
    <property type="match status" value="1"/>
</dbReference>
<dbReference type="Pfam" id="PF11798">
    <property type="entry name" value="IMS_HHH"/>
    <property type="match status" value="1"/>
</dbReference>
<dbReference type="SUPFAM" id="SSF56672">
    <property type="entry name" value="DNA/RNA polymerases"/>
    <property type="match status" value="1"/>
</dbReference>
<dbReference type="SUPFAM" id="SSF100879">
    <property type="entry name" value="Lesion bypass DNA polymerase (Y-family), little finger domain"/>
    <property type="match status" value="1"/>
</dbReference>
<dbReference type="PROSITE" id="PS50173">
    <property type="entry name" value="UMUC"/>
    <property type="match status" value="1"/>
</dbReference>
<gene>
    <name evidence="1" type="primary">dinB</name>
    <name type="ordered locus">cbdbA12</name>
</gene>
<proteinExistence type="inferred from homology"/>
<reference key="1">
    <citation type="journal article" date="2005" name="Nat. Biotechnol.">
        <title>Genome sequence of the chlorinated compound-respiring bacterium Dehalococcoides species strain CBDB1.</title>
        <authorList>
            <person name="Kube M."/>
            <person name="Beck A."/>
            <person name="Zinder S.H."/>
            <person name="Kuhl H."/>
            <person name="Reinhardt R."/>
            <person name="Adrian L."/>
        </authorList>
    </citation>
    <scope>NUCLEOTIDE SEQUENCE [LARGE SCALE GENOMIC DNA]</scope>
    <source>
        <strain>CBDB1</strain>
    </source>
</reference>
<comment type="function">
    <text evidence="1">Poorly processive, error-prone DNA polymerase involved in untargeted mutagenesis. Copies undamaged DNA at stalled replication forks, which arise in vivo from mismatched or misaligned primer ends. These misaligned primers can be extended by PolIV. Exhibits no 3'-5' exonuclease (proofreading) activity. May be involved in translesional synthesis, in conjunction with the beta clamp from PolIII.</text>
</comment>
<comment type="catalytic activity">
    <reaction evidence="1">
        <text>DNA(n) + a 2'-deoxyribonucleoside 5'-triphosphate = DNA(n+1) + diphosphate</text>
        <dbReference type="Rhea" id="RHEA:22508"/>
        <dbReference type="Rhea" id="RHEA-COMP:17339"/>
        <dbReference type="Rhea" id="RHEA-COMP:17340"/>
        <dbReference type="ChEBI" id="CHEBI:33019"/>
        <dbReference type="ChEBI" id="CHEBI:61560"/>
        <dbReference type="ChEBI" id="CHEBI:173112"/>
        <dbReference type="EC" id="2.7.7.7"/>
    </reaction>
</comment>
<comment type="cofactor">
    <cofactor evidence="1">
        <name>Mg(2+)</name>
        <dbReference type="ChEBI" id="CHEBI:18420"/>
    </cofactor>
    <text evidence="1">Binds 2 magnesium ions per subunit.</text>
</comment>
<comment type="subunit">
    <text evidence="1">Monomer.</text>
</comment>
<comment type="subcellular location">
    <subcellularLocation>
        <location evidence="1">Cytoplasm</location>
    </subcellularLocation>
</comment>
<comment type="similarity">
    <text evidence="1">Belongs to the DNA polymerase type-Y family.</text>
</comment>
<evidence type="ECO:0000255" key="1">
    <source>
        <dbReference type="HAMAP-Rule" id="MF_01113"/>
    </source>
</evidence>
<feature type="chain" id="PRO_1000137129" description="DNA polymerase IV">
    <location>
        <begin position="1"/>
        <end position="390"/>
    </location>
</feature>
<feature type="domain" description="UmuC" evidence="1">
    <location>
        <begin position="6"/>
        <end position="187"/>
    </location>
</feature>
<feature type="active site" evidence="1">
    <location>
        <position position="106"/>
    </location>
</feature>
<feature type="binding site" evidence="1">
    <location>
        <position position="10"/>
    </location>
    <ligand>
        <name>Mg(2+)</name>
        <dbReference type="ChEBI" id="CHEBI:18420"/>
    </ligand>
</feature>
<feature type="binding site" evidence="1">
    <location>
        <position position="105"/>
    </location>
    <ligand>
        <name>Mg(2+)</name>
        <dbReference type="ChEBI" id="CHEBI:18420"/>
    </ligand>
</feature>
<feature type="site" description="Substrate discrimination" evidence="1">
    <location>
        <position position="15"/>
    </location>
</feature>
<accession>Q3ZWB2</accession>
<organism>
    <name type="scientific">Dehalococcoides mccartyi (strain CBDB1)</name>
    <dbReference type="NCBI Taxonomy" id="255470"/>
    <lineage>
        <taxon>Bacteria</taxon>
        <taxon>Bacillati</taxon>
        <taxon>Chloroflexota</taxon>
        <taxon>Dehalococcoidia</taxon>
        <taxon>Dehalococcoidales</taxon>
        <taxon>Dehalococcoidaceae</taxon>
        <taxon>Dehalococcoides</taxon>
    </lineage>
</organism>